<feature type="chain" id="PRO_0000308432" description="Signal transduction histidine-protein kinase/phosphatase MprB">
    <location>
        <begin position="1"/>
        <end position="504"/>
    </location>
</feature>
<feature type="topological domain" description="Cytoplasmic" evidence="2">
    <location>
        <begin position="1"/>
        <end position="26"/>
    </location>
</feature>
<feature type="transmembrane region" description="Helical" evidence="2">
    <location>
        <begin position="27"/>
        <end position="47"/>
    </location>
</feature>
<feature type="topological domain" description="Extracellular" evidence="2">
    <location>
        <begin position="48"/>
        <end position="163"/>
    </location>
</feature>
<feature type="transmembrane region" description="Helical" evidence="2">
    <location>
        <begin position="164"/>
        <end position="184"/>
    </location>
</feature>
<feature type="topological domain" description="Cytoplasmic" evidence="2">
    <location>
        <begin position="185"/>
        <end position="504"/>
    </location>
</feature>
<feature type="domain" description="HAMP" evidence="3">
    <location>
        <begin position="186"/>
        <end position="238"/>
    </location>
</feature>
<feature type="domain" description="Histidine kinase" evidence="4">
    <location>
        <begin position="246"/>
        <end position="466"/>
    </location>
</feature>
<feature type="region of interest" description="Disordered" evidence="5">
    <location>
        <begin position="471"/>
        <end position="504"/>
    </location>
</feature>
<feature type="compositionally biased region" description="Polar residues" evidence="5">
    <location>
        <begin position="487"/>
        <end position="504"/>
    </location>
</feature>
<feature type="modified residue" description="Phosphohistidine; by autocatalysis" evidence="4">
    <location>
        <position position="249"/>
    </location>
</feature>
<dbReference type="EC" id="2.7.13.3"/>
<dbReference type="EC" id="3.1.3.-"/>
<dbReference type="EMBL" id="AF490842">
    <property type="protein sequence ID" value="AAO85469.1"/>
    <property type="molecule type" value="Genomic_DNA"/>
</dbReference>
<dbReference type="EMBL" id="LT708304">
    <property type="protein sequence ID" value="SIT99607.1"/>
    <property type="molecule type" value="Genomic_DNA"/>
</dbReference>
<dbReference type="RefSeq" id="NP_854665.1">
    <property type="nucleotide sequence ID" value="NC_002945.3"/>
</dbReference>
<dbReference type="RefSeq" id="WP_003405123.1">
    <property type="nucleotide sequence ID" value="NC_002945.4"/>
</dbReference>
<dbReference type="SMR" id="Q7U0X3"/>
<dbReference type="GeneID" id="45424951"/>
<dbReference type="KEGG" id="mbo:BQ2027_MB1008"/>
<dbReference type="PATRIC" id="fig|233413.5.peg.1097"/>
<dbReference type="Proteomes" id="UP000001419">
    <property type="component" value="Chromosome"/>
</dbReference>
<dbReference type="GO" id="GO:0005886">
    <property type="term" value="C:plasma membrane"/>
    <property type="evidence" value="ECO:0007669"/>
    <property type="project" value="UniProtKB-SubCell"/>
</dbReference>
<dbReference type="GO" id="GO:0005524">
    <property type="term" value="F:ATP binding"/>
    <property type="evidence" value="ECO:0007669"/>
    <property type="project" value="UniProtKB-KW"/>
</dbReference>
<dbReference type="GO" id="GO:0004721">
    <property type="term" value="F:phosphoprotein phosphatase activity"/>
    <property type="evidence" value="ECO:0007669"/>
    <property type="project" value="UniProtKB-KW"/>
</dbReference>
<dbReference type="GO" id="GO:0000155">
    <property type="term" value="F:phosphorelay sensor kinase activity"/>
    <property type="evidence" value="ECO:0007669"/>
    <property type="project" value="InterPro"/>
</dbReference>
<dbReference type="CDD" id="cd06225">
    <property type="entry name" value="HAMP"/>
    <property type="match status" value="1"/>
</dbReference>
<dbReference type="CDD" id="cd00075">
    <property type="entry name" value="HATPase"/>
    <property type="match status" value="1"/>
</dbReference>
<dbReference type="CDD" id="cd00082">
    <property type="entry name" value="HisKA"/>
    <property type="match status" value="1"/>
</dbReference>
<dbReference type="FunFam" id="1.10.287.130:FF:000031">
    <property type="entry name" value="Two-component sensor histidine kinase"/>
    <property type="match status" value="1"/>
</dbReference>
<dbReference type="FunFam" id="3.30.565.10:FF:000066">
    <property type="entry name" value="Two-component sensor kinase MprB"/>
    <property type="match status" value="1"/>
</dbReference>
<dbReference type="Gene3D" id="1.10.287.130">
    <property type="match status" value="1"/>
</dbReference>
<dbReference type="Gene3D" id="6.10.340.10">
    <property type="match status" value="1"/>
</dbReference>
<dbReference type="Gene3D" id="3.30.565.10">
    <property type="entry name" value="Histidine kinase-like ATPase, C-terminal domain"/>
    <property type="match status" value="1"/>
</dbReference>
<dbReference type="InterPro" id="IPR050980">
    <property type="entry name" value="2C_sensor_his_kinase"/>
</dbReference>
<dbReference type="InterPro" id="IPR003660">
    <property type="entry name" value="HAMP_dom"/>
</dbReference>
<dbReference type="InterPro" id="IPR036890">
    <property type="entry name" value="HATPase_C_sf"/>
</dbReference>
<dbReference type="InterPro" id="IPR005467">
    <property type="entry name" value="His_kinase_dom"/>
</dbReference>
<dbReference type="InterPro" id="IPR003661">
    <property type="entry name" value="HisK_dim/P_dom"/>
</dbReference>
<dbReference type="InterPro" id="IPR036097">
    <property type="entry name" value="HisK_dim/P_sf"/>
</dbReference>
<dbReference type="InterPro" id="IPR004358">
    <property type="entry name" value="Sig_transdc_His_kin-like_C"/>
</dbReference>
<dbReference type="PANTHER" id="PTHR44936">
    <property type="entry name" value="SENSOR PROTEIN CREC"/>
    <property type="match status" value="1"/>
</dbReference>
<dbReference type="PANTHER" id="PTHR44936:SF9">
    <property type="entry name" value="SENSOR PROTEIN CREC"/>
    <property type="match status" value="1"/>
</dbReference>
<dbReference type="Pfam" id="PF00672">
    <property type="entry name" value="HAMP"/>
    <property type="match status" value="1"/>
</dbReference>
<dbReference type="Pfam" id="PF02518">
    <property type="entry name" value="HATPase_c"/>
    <property type="match status" value="1"/>
</dbReference>
<dbReference type="Pfam" id="PF00512">
    <property type="entry name" value="HisKA"/>
    <property type="match status" value="1"/>
</dbReference>
<dbReference type="PRINTS" id="PR00344">
    <property type="entry name" value="BCTRLSENSOR"/>
</dbReference>
<dbReference type="SMART" id="SM00304">
    <property type="entry name" value="HAMP"/>
    <property type="match status" value="1"/>
</dbReference>
<dbReference type="SMART" id="SM00387">
    <property type="entry name" value="HATPase_c"/>
    <property type="match status" value="1"/>
</dbReference>
<dbReference type="SMART" id="SM00388">
    <property type="entry name" value="HisKA"/>
    <property type="match status" value="1"/>
</dbReference>
<dbReference type="SUPFAM" id="SSF55874">
    <property type="entry name" value="ATPase domain of HSP90 chaperone/DNA topoisomerase II/histidine kinase"/>
    <property type="match status" value="1"/>
</dbReference>
<dbReference type="SUPFAM" id="SSF158472">
    <property type="entry name" value="HAMP domain-like"/>
    <property type="match status" value="1"/>
</dbReference>
<dbReference type="SUPFAM" id="SSF47384">
    <property type="entry name" value="Homodimeric domain of signal transducing histidine kinase"/>
    <property type="match status" value="1"/>
</dbReference>
<dbReference type="PROSITE" id="PS50885">
    <property type="entry name" value="HAMP"/>
    <property type="match status" value="1"/>
</dbReference>
<dbReference type="PROSITE" id="PS50109">
    <property type="entry name" value="HIS_KIN"/>
    <property type="match status" value="1"/>
</dbReference>
<reference key="1">
    <citation type="journal article" date="2003" name="Infect. Immun.">
        <title>Functional analysis of the Mycobacterium tuberculosis MprAB two-component signal transduction system.</title>
        <authorList>
            <person name="Zahrt T.C."/>
            <person name="Wozniak C."/>
            <person name="Jones D."/>
            <person name="Trevett A."/>
        </authorList>
    </citation>
    <scope>NUCLEOTIDE SEQUENCE [GENOMIC DNA]</scope>
    <source>
        <strain>BCG / Pasteur</strain>
    </source>
</reference>
<reference key="2">
    <citation type="journal article" date="2003" name="Proc. Natl. Acad. Sci. U.S.A.">
        <title>The complete genome sequence of Mycobacterium bovis.</title>
        <authorList>
            <person name="Garnier T."/>
            <person name="Eiglmeier K."/>
            <person name="Camus J.-C."/>
            <person name="Medina N."/>
            <person name="Mansoor H."/>
            <person name="Pryor M."/>
            <person name="Duthoy S."/>
            <person name="Grondin S."/>
            <person name="Lacroix C."/>
            <person name="Monsempe C."/>
            <person name="Simon S."/>
            <person name="Harris B."/>
            <person name="Atkin R."/>
            <person name="Doggett J."/>
            <person name="Mayes R."/>
            <person name="Keating L."/>
            <person name="Wheeler P.R."/>
            <person name="Parkhill J."/>
            <person name="Barrell B.G."/>
            <person name="Cole S.T."/>
            <person name="Gordon S.V."/>
            <person name="Hewinson R.G."/>
        </authorList>
    </citation>
    <scope>NUCLEOTIDE SEQUENCE [LARGE SCALE GENOMIC DNA]</scope>
    <source>
        <strain>ATCC BAA-935 / AF2122/97</strain>
    </source>
</reference>
<reference key="3">
    <citation type="journal article" date="2017" name="Genome Announc.">
        <title>Updated reference genome sequence and annotation of Mycobacterium bovis AF2122/97.</title>
        <authorList>
            <person name="Malone K.M."/>
            <person name="Farrell D."/>
            <person name="Stuber T.P."/>
            <person name="Schubert O.T."/>
            <person name="Aebersold R."/>
            <person name="Robbe-Austerman S."/>
            <person name="Gordon S.V."/>
        </authorList>
    </citation>
    <scope>NUCLEOTIDE SEQUENCE [LARGE SCALE GENOMIC DNA]</scope>
    <scope>GENOME REANNOTATION</scope>
    <source>
        <strain>ATCC BAA-935 / AF2122/97</strain>
    </source>
</reference>
<reference key="4">
    <citation type="journal article" date="2001" name="Proc. Natl. Acad. Sci. U.S.A.">
        <title>Mycobacterium tuberculosis signal transduction system required for persistent infections.</title>
        <authorList>
            <person name="Zahrt T.C."/>
            <person name="Deretic V."/>
        </authorList>
    </citation>
    <scope>INDUCTION IN MACROPHAGES</scope>
    <source>
        <strain>BCG / Pasteur</strain>
    </source>
</reference>
<reference key="5">
    <citation type="journal article" date="2005" name="J. Bacteriol.">
        <title>Identification and characterization of a regulatory sequence recognized by Mycobacterium tuberculosis persistence regulator MprA.</title>
        <authorList>
            <person name="He H."/>
            <person name="Zahrt T.C."/>
        </authorList>
    </citation>
    <scope>FUNCTION IN MPRA-MEDIATED TRANSCRIPTIONAL REGULATION</scope>
    <scope>INDUCTION</scope>
    <source>
        <strain>BCG / Pasteur</strain>
    </source>
</reference>
<name>MPRB_MYCBO</name>
<keyword id="KW-0067">ATP-binding</keyword>
<keyword id="KW-1003">Cell membrane</keyword>
<keyword id="KW-0378">Hydrolase</keyword>
<keyword id="KW-0418">Kinase</keyword>
<keyword id="KW-0460">Magnesium</keyword>
<keyword id="KW-0464">Manganese</keyword>
<keyword id="KW-0472">Membrane</keyword>
<keyword id="KW-0547">Nucleotide-binding</keyword>
<keyword id="KW-0597">Phosphoprotein</keyword>
<keyword id="KW-0904">Protein phosphatase</keyword>
<keyword id="KW-1185">Reference proteome</keyword>
<keyword id="KW-0346">Stress response</keyword>
<keyword id="KW-0808">Transferase</keyword>
<keyword id="KW-0812">Transmembrane</keyword>
<keyword id="KW-1133">Transmembrane helix</keyword>
<keyword id="KW-0902">Two-component regulatory system</keyword>
<keyword id="KW-0843">Virulence</keyword>
<accession>Q7U0X3</accession>
<accession>A0A1R3XX07</accession>
<accession>Q84BW9</accession>
<accession>X2BGP2</accession>
<sequence>MWWFRRRDRAPLRATSSLSLRWRVMLLAMSMVAMVVVLMSFAVYAVISAALYSDIDNQLQSRAQLLIASGSLAADPGKAIEGTAYSDVNAMLVNPGQSIYTAQQPGQTLPVGAAEKAVIRGELFMSRRTTADQRVLAIRLTNGSSLLISKSLKPTEAVMNKLRWVLLIVGGIGVAVAAVAGGMVTRAGLRPVGRLTEAAERVARTDDLRPIPVFGSDELARLTEAFNLMLRALAESRERQARLVTDAGHELRTPLTSLRTNVELLMASMAPGAPRLPKQEMVDLRADVLAQIEELSTLVGDLVDLSRGDAGEVVHEPVDMADVVDRSLERVRRRRNDIHFDVEVIGWQVYGDTAGLSRMALNLMDNAAKWSPPGGHVGVRLSQLDASHAELVVSDRGPGIPVQERRLVFERFYRSASARALPGSGLGLAIVKQVVLNHGGLLRIEDTDPGGQPPGTSIYVLLPGRRMPIPQLPGATAGARSTDIENSRGSANVISVESQSTRAT</sequence>
<organism>
    <name type="scientific">Mycobacterium bovis (strain ATCC BAA-935 / AF2122/97)</name>
    <dbReference type="NCBI Taxonomy" id="233413"/>
    <lineage>
        <taxon>Bacteria</taxon>
        <taxon>Bacillati</taxon>
        <taxon>Actinomycetota</taxon>
        <taxon>Actinomycetes</taxon>
        <taxon>Mycobacteriales</taxon>
        <taxon>Mycobacteriaceae</taxon>
        <taxon>Mycobacterium</taxon>
        <taxon>Mycobacterium tuberculosis complex</taxon>
    </lineage>
</organism>
<comment type="function">
    <text evidence="1 7">Member of the two-component regulatory system MprB/MprA which contributes to maintaining a balance among several systems involved in stress resistance and is required for establishment and maintenance of persistent infection in the host. In response to environmental signals MprB acts both as a membrane-associated protein kinase that undergoes autophosphorylation and subsequently transfers the phosphate to MprA, and a protein phosphatase that dephosphorylates phospho-MprA (By similarity). MprB/MprA up-regulates expression of mprA and pepD.</text>
</comment>
<comment type="catalytic activity">
    <reaction>
        <text>ATP + protein L-histidine = ADP + protein N-phospho-L-histidine.</text>
        <dbReference type="EC" id="2.7.13.3"/>
    </reaction>
</comment>
<comment type="cofactor">
    <cofactor evidence="1">
        <name>Mg(2+)</name>
        <dbReference type="ChEBI" id="CHEBI:18420"/>
    </cofactor>
    <cofactor evidence="1">
        <name>Mn(2+)</name>
        <dbReference type="ChEBI" id="CHEBI:29035"/>
    </cofactor>
</comment>
<comment type="subcellular location">
    <subcellularLocation>
        <location evidence="8">Cell membrane</location>
        <topology evidence="8">Multi-pass membrane protein</topology>
    </subcellularLocation>
</comment>
<comment type="induction">
    <text evidence="6 7">Induced by MprA. Induced by low concentrations of sodium dodecyl sulfate (SDS). In strain BCG / Pasteur, induced during growth in macrophages.</text>
</comment>
<comment type="PTM">
    <text evidence="1">Autophosphorylated.</text>
</comment>
<gene>
    <name type="primary">mprB</name>
    <name type="ordered locus">BQ2027_MB1008</name>
</gene>
<protein>
    <recommendedName>
        <fullName>Signal transduction histidine-protein kinase/phosphatase MprB</fullName>
        <ecNumber>2.7.13.3</ecNumber>
        <ecNumber>3.1.3.-</ecNumber>
    </recommendedName>
    <alternativeName>
        <fullName>Mycobacterial persistence regulator B</fullName>
    </alternativeName>
</protein>
<evidence type="ECO:0000250" key="1"/>
<evidence type="ECO:0000255" key="2"/>
<evidence type="ECO:0000255" key="3">
    <source>
        <dbReference type="PROSITE-ProRule" id="PRU00102"/>
    </source>
</evidence>
<evidence type="ECO:0000255" key="4">
    <source>
        <dbReference type="PROSITE-ProRule" id="PRU00107"/>
    </source>
</evidence>
<evidence type="ECO:0000256" key="5">
    <source>
        <dbReference type="SAM" id="MobiDB-lite"/>
    </source>
</evidence>
<evidence type="ECO:0000269" key="6">
    <source>
    </source>
</evidence>
<evidence type="ECO:0000269" key="7">
    <source>
    </source>
</evidence>
<evidence type="ECO:0000305" key="8"/>
<proteinExistence type="evidence at protein level"/>